<dbReference type="EC" id="6.5.1.2" evidence="1"/>
<dbReference type="EMBL" id="CP000123">
    <property type="protein sequence ID" value="ABC01419.1"/>
    <property type="molecule type" value="Genomic_DNA"/>
</dbReference>
<dbReference type="RefSeq" id="WP_011387556.1">
    <property type="nucleotide sequence ID" value="NC_007633.1"/>
</dbReference>
<dbReference type="SMR" id="Q2SRE1"/>
<dbReference type="GeneID" id="23778334"/>
<dbReference type="KEGG" id="mcp:MCAP_0712"/>
<dbReference type="HOGENOM" id="CLU_007764_2_1_14"/>
<dbReference type="PhylomeDB" id="Q2SRE1"/>
<dbReference type="Proteomes" id="UP000001928">
    <property type="component" value="Chromosome"/>
</dbReference>
<dbReference type="GO" id="GO:0005829">
    <property type="term" value="C:cytosol"/>
    <property type="evidence" value="ECO:0007669"/>
    <property type="project" value="TreeGrafter"/>
</dbReference>
<dbReference type="GO" id="GO:0003911">
    <property type="term" value="F:DNA ligase (NAD+) activity"/>
    <property type="evidence" value="ECO:0007669"/>
    <property type="project" value="UniProtKB-UniRule"/>
</dbReference>
<dbReference type="GO" id="GO:0046872">
    <property type="term" value="F:metal ion binding"/>
    <property type="evidence" value="ECO:0007669"/>
    <property type="project" value="UniProtKB-KW"/>
</dbReference>
<dbReference type="GO" id="GO:0006281">
    <property type="term" value="P:DNA repair"/>
    <property type="evidence" value="ECO:0007669"/>
    <property type="project" value="UniProtKB-KW"/>
</dbReference>
<dbReference type="GO" id="GO:0006260">
    <property type="term" value="P:DNA replication"/>
    <property type="evidence" value="ECO:0007669"/>
    <property type="project" value="UniProtKB-KW"/>
</dbReference>
<dbReference type="CDD" id="cd17748">
    <property type="entry name" value="BRCT_DNA_ligase_like"/>
    <property type="match status" value="1"/>
</dbReference>
<dbReference type="CDD" id="cd00114">
    <property type="entry name" value="LIGANc"/>
    <property type="match status" value="1"/>
</dbReference>
<dbReference type="FunFam" id="1.10.150.20:FF:000006">
    <property type="entry name" value="DNA ligase"/>
    <property type="match status" value="1"/>
</dbReference>
<dbReference type="FunFam" id="3.30.470.30:FF:000001">
    <property type="entry name" value="DNA ligase"/>
    <property type="match status" value="1"/>
</dbReference>
<dbReference type="Gene3D" id="1.10.150.20">
    <property type="entry name" value="5' to 3' exonuclease, C-terminal subdomain"/>
    <property type="match status" value="2"/>
</dbReference>
<dbReference type="Gene3D" id="3.40.50.10190">
    <property type="entry name" value="BRCT domain"/>
    <property type="match status" value="1"/>
</dbReference>
<dbReference type="Gene3D" id="3.30.470.30">
    <property type="entry name" value="DNA ligase/mRNA capping enzyme"/>
    <property type="match status" value="1"/>
</dbReference>
<dbReference type="Gene3D" id="1.10.287.610">
    <property type="entry name" value="Helix hairpin bin"/>
    <property type="match status" value="1"/>
</dbReference>
<dbReference type="Gene3D" id="2.40.50.140">
    <property type="entry name" value="Nucleic acid-binding proteins"/>
    <property type="match status" value="1"/>
</dbReference>
<dbReference type="HAMAP" id="MF_01588">
    <property type="entry name" value="DNA_ligase_A"/>
    <property type="match status" value="1"/>
</dbReference>
<dbReference type="InterPro" id="IPR001357">
    <property type="entry name" value="BRCT_dom"/>
</dbReference>
<dbReference type="InterPro" id="IPR036420">
    <property type="entry name" value="BRCT_dom_sf"/>
</dbReference>
<dbReference type="InterPro" id="IPR041663">
    <property type="entry name" value="DisA/LigA_HHH"/>
</dbReference>
<dbReference type="InterPro" id="IPR001679">
    <property type="entry name" value="DNA_ligase"/>
</dbReference>
<dbReference type="InterPro" id="IPR018239">
    <property type="entry name" value="DNA_ligase_AS"/>
</dbReference>
<dbReference type="InterPro" id="IPR013839">
    <property type="entry name" value="DNAligase_adenylation"/>
</dbReference>
<dbReference type="InterPro" id="IPR013840">
    <property type="entry name" value="DNAligase_N"/>
</dbReference>
<dbReference type="InterPro" id="IPR012340">
    <property type="entry name" value="NA-bd_OB-fold"/>
</dbReference>
<dbReference type="InterPro" id="IPR004150">
    <property type="entry name" value="NAD_DNA_ligase_OB"/>
</dbReference>
<dbReference type="InterPro" id="IPR010994">
    <property type="entry name" value="RuvA_2-like"/>
</dbReference>
<dbReference type="InterPro" id="IPR004149">
    <property type="entry name" value="Znf_DNAligase_C4"/>
</dbReference>
<dbReference type="NCBIfam" id="TIGR00575">
    <property type="entry name" value="dnlj"/>
    <property type="match status" value="1"/>
</dbReference>
<dbReference type="NCBIfam" id="NF005932">
    <property type="entry name" value="PRK07956.1"/>
    <property type="match status" value="1"/>
</dbReference>
<dbReference type="PANTHER" id="PTHR23389">
    <property type="entry name" value="CHROMOSOME TRANSMISSION FIDELITY FACTOR 18"/>
    <property type="match status" value="1"/>
</dbReference>
<dbReference type="PANTHER" id="PTHR23389:SF9">
    <property type="entry name" value="DNA LIGASE"/>
    <property type="match status" value="1"/>
</dbReference>
<dbReference type="Pfam" id="PF00533">
    <property type="entry name" value="BRCT"/>
    <property type="match status" value="1"/>
</dbReference>
<dbReference type="Pfam" id="PF01653">
    <property type="entry name" value="DNA_ligase_aden"/>
    <property type="match status" value="1"/>
</dbReference>
<dbReference type="Pfam" id="PF03120">
    <property type="entry name" value="DNA_ligase_OB"/>
    <property type="match status" value="1"/>
</dbReference>
<dbReference type="Pfam" id="PF03119">
    <property type="entry name" value="DNA_ligase_ZBD"/>
    <property type="match status" value="1"/>
</dbReference>
<dbReference type="Pfam" id="PF12826">
    <property type="entry name" value="HHH_2"/>
    <property type="match status" value="1"/>
</dbReference>
<dbReference type="PIRSF" id="PIRSF001604">
    <property type="entry name" value="LigA"/>
    <property type="match status" value="1"/>
</dbReference>
<dbReference type="SMART" id="SM00292">
    <property type="entry name" value="BRCT"/>
    <property type="match status" value="1"/>
</dbReference>
<dbReference type="SMART" id="SM00532">
    <property type="entry name" value="LIGANc"/>
    <property type="match status" value="1"/>
</dbReference>
<dbReference type="SUPFAM" id="SSF52113">
    <property type="entry name" value="BRCT domain"/>
    <property type="match status" value="1"/>
</dbReference>
<dbReference type="SUPFAM" id="SSF56091">
    <property type="entry name" value="DNA ligase/mRNA capping enzyme, catalytic domain"/>
    <property type="match status" value="1"/>
</dbReference>
<dbReference type="SUPFAM" id="SSF50249">
    <property type="entry name" value="Nucleic acid-binding proteins"/>
    <property type="match status" value="1"/>
</dbReference>
<dbReference type="SUPFAM" id="SSF47781">
    <property type="entry name" value="RuvA domain 2-like"/>
    <property type="match status" value="1"/>
</dbReference>
<dbReference type="PROSITE" id="PS50172">
    <property type="entry name" value="BRCT"/>
    <property type="match status" value="1"/>
</dbReference>
<dbReference type="PROSITE" id="PS01055">
    <property type="entry name" value="DNA_LIGASE_N1"/>
    <property type="match status" value="1"/>
</dbReference>
<keyword id="KW-0227">DNA damage</keyword>
<keyword id="KW-0234">DNA repair</keyword>
<keyword id="KW-0235">DNA replication</keyword>
<keyword id="KW-0436">Ligase</keyword>
<keyword id="KW-0460">Magnesium</keyword>
<keyword id="KW-0464">Manganese</keyword>
<keyword id="KW-0479">Metal-binding</keyword>
<keyword id="KW-0520">NAD</keyword>
<keyword id="KW-0862">Zinc</keyword>
<sequence length="668" mass="75778">MSKEQILLRINQLKEQLNLWSKQYYVDDNPSVDDTEYDLALKELISLENLYPEFITSDSPSQKVGGTVSEKFLKITHKTPMLSLGNVFNFDEFLEFNTQVSKVSNNLNNEYVAELKIDGLSISLVYENGVLVSAATRGNGVIGEDVTTNVRTIKSIPLKISKKERVEVRGEIYLSKAEFEKINQKRLLNNEDLFINPRNAAAGTLRQLDSKIVASRNLDAFLYYYISDDSPNLNQYESILKLNQLGFKTNKETMLCKNLDQIKAYIDKYTNLKNDLDYQIDGIVFKINDKNLQNSLGFTSKIPKWAIAYKFPAEIKQTKLLDIFATVGRTGKITYNAKLEPVFLMGATISAATLNNAEYIKSKDLRINSIVKIKKAGDVIPEVIEAIKDETFYNLEVFQPILYCPNCHSLLEKNENEVDQFCINSSCSMKILRSLQHFSSREAMNIVSLGDRSLEILFNLEIIQNISDIYKLEEYKDQILAIENFGLKSYLNLIDSINMSKNNSLEKVLFGLGIRHIGSKTAKILARKYQNIDNLMKASYDELIQINSIGESLALSIIDWFKIEDNLKLINELKSFNINFNYLGAKINSDSIIANKTFVITGTLTRPREEFKTLIENNAGKISGSISKQTDYLLAGNNVGSKLEKAKKLGVIIIDEQQFFDLLKSEKG</sequence>
<reference key="1">
    <citation type="submission" date="2005-09" db="EMBL/GenBank/DDBJ databases">
        <authorList>
            <person name="Glass J.I."/>
            <person name="Lartigue C."/>
            <person name="Pfannkoch C."/>
            <person name="Baden-Tillson H."/>
            <person name="Smith H.O."/>
            <person name="Venter J.C."/>
            <person name="Roske K."/>
            <person name="Wise K.S."/>
            <person name="Calcutt M.J."/>
            <person name="Nelson W.C."/>
            <person name="Nierman W.C."/>
        </authorList>
    </citation>
    <scope>NUCLEOTIDE SEQUENCE [LARGE SCALE GENOMIC DNA]</scope>
    <source>
        <strain>California kid / ATCC 27343 / NCTC 10154</strain>
    </source>
</reference>
<evidence type="ECO:0000255" key="1">
    <source>
        <dbReference type="HAMAP-Rule" id="MF_01588"/>
    </source>
</evidence>
<protein>
    <recommendedName>
        <fullName evidence="1">DNA ligase</fullName>
        <ecNumber evidence="1">6.5.1.2</ecNumber>
    </recommendedName>
    <alternativeName>
        <fullName evidence="1">Polydeoxyribonucleotide synthase [NAD(+)]</fullName>
    </alternativeName>
</protein>
<comment type="function">
    <text evidence="1">DNA ligase that catalyzes the formation of phosphodiester linkages between 5'-phosphoryl and 3'-hydroxyl groups in double-stranded DNA using NAD as a coenzyme and as the energy source for the reaction. It is essential for DNA replication and repair of damaged DNA.</text>
</comment>
<comment type="catalytic activity">
    <reaction evidence="1">
        <text>NAD(+) + (deoxyribonucleotide)n-3'-hydroxyl + 5'-phospho-(deoxyribonucleotide)m = (deoxyribonucleotide)n+m + AMP + beta-nicotinamide D-nucleotide.</text>
        <dbReference type="EC" id="6.5.1.2"/>
    </reaction>
</comment>
<comment type="cofactor">
    <cofactor evidence="1">
        <name>Mg(2+)</name>
        <dbReference type="ChEBI" id="CHEBI:18420"/>
    </cofactor>
    <cofactor evidence="1">
        <name>Mn(2+)</name>
        <dbReference type="ChEBI" id="CHEBI:29035"/>
    </cofactor>
</comment>
<comment type="similarity">
    <text evidence="1">Belongs to the NAD-dependent DNA ligase family. LigA subfamily.</text>
</comment>
<organism>
    <name type="scientific">Mycoplasma capricolum subsp. capricolum (strain California kid / ATCC 27343 / NCTC 10154)</name>
    <dbReference type="NCBI Taxonomy" id="340047"/>
    <lineage>
        <taxon>Bacteria</taxon>
        <taxon>Bacillati</taxon>
        <taxon>Mycoplasmatota</taxon>
        <taxon>Mollicutes</taxon>
        <taxon>Mycoplasmataceae</taxon>
        <taxon>Mycoplasma</taxon>
    </lineage>
</organism>
<name>DNLJ_MYCCT</name>
<accession>Q2SRE1</accession>
<feature type="chain" id="PRO_0000313319" description="DNA ligase">
    <location>
        <begin position="1"/>
        <end position="668"/>
    </location>
</feature>
<feature type="domain" description="BRCT" evidence="1">
    <location>
        <begin position="588"/>
        <end position="668"/>
    </location>
</feature>
<feature type="active site" description="N6-AMP-lysine intermediate" evidence="1">
    <location>
        <position position="116"/>
    </location>
</feature>
<feature type="binding site" evidence="1">
    <location>
        <begin position="34"/>
        <end position="38"/>
    </location>
    <ligand>
        <name>NAD(+)</name>
        <dbReference type="ChEBI" id="CHEBI:57540"/>
    </ligand>
</feature>
<feature type="binding site" evidence="1">
    <location>
        <begin position="83"/>
        <end position="84"/>
    </location>
    <ligand>
        <name>NAD(+)</name>
        <dbReference type="ChEBI" id="CHEBI:57540"/>
    </ligand>
</feature>
<feature type="binding site" evidence="1">
    <location>
        <position position="114"/>
    </location>
    <ligand>
        <name>NAD(+)</name>
        <dbReference type="ChEBI" id="CHEBI:57540"/>
    </ligand>
</feature>
<feature type="binding site" evidence="1">
    <location>
        <position position="137"/>
    </location>
    <ligand>
        <name>NAD(+)</name>
        <dbReference type="ChEBI" id="CHEBI:57540"/>
    </ligand>
</feature>
<feature type="binding site" evidence="1">
    <location>
        <position position="171"/>
    </location>
    <ligand>
        <name>NAD(+)</name>
        <dbReference type="ChEBI" id="CHEBI:57540"/>
    </ligand>
</feature>
<feature type="binding site" evidence="1">
    <location>
        <position position="286"/>
    </location>
    <ligand>
        <name>NAD(+)</name>
        <dbReference type="ChEBI" id="CHEBI:57540"/>
    </ligand>
</feature>
<feature type="binding site" evidence="1">
    <location>
        <position position="310"/>
    </location>
    <ligand>
        <name>NAD(+)</name>
        <dbReference type="ChEBI" id="CHEBI:57540"/>
    </ligand>
</feature>
<feature type="binding site" evidence="1">
    <location>
        <position position="404"/>
    </location>
    <ligand>
        <name>Zn(2+)</name>
        <dbReference type="ChEBI" id="CHEBI:29105"/>
    </ligand>
</feature>
<feature type="binding site" evidence="1">
    <location>
        <position position="407"/>
    </location>
    <ligand>
        <name>Zn(2+)</name>
        <dbReference type="ChEBI" id="CHEBI:29105"/>
    </ligand>
</feature>
<feature type="binding site" evidence="1">
    <location>
        <position position="422"/>
    </location>
    <ligand>
        <name>Zn(2+)</name>
        <dbReference type="ChEBI" id="CHEBI:29105"/>
    </ligand>
</feature>
<feature type="binding site" evidence="1">
    <location>
        <position position="427"/>
    </location>
    <ligand>
        <name>Zn(2+)</name>
        <dbReference type="ChEBI" id="CHEBI:29105"/>
    </ligand>
</feature>
<proteinExistence type="inferred from homology"/>
<gene>
    <name evidence="1" type="primary">ligA</name>
    <name type="ordered locus">MCAP_0712</name>
</gene>